<dbReference type="EC" id="1.1.1.290" evidence="1"/>
<dbReference type="EMBL" id="CP000926">
    <property type="protein sequence ID" value="ABY97560.1"/>
    <property type="molecule type" value="Genomic_DNA"/>
</dbReference>
<dbReference type="RefSeq" id="WP_012271323.1">
    <property type="nucleotide sequence ID" value="NC_010322.1"/>
</dbReference>
<dbReference type="SMR" id="B0KGD9"/>
<dbReference type="KEGG" id="ppg:PputGB1_1657"/>
<dbReference type="eggNOG" id="COG0111">
    <property type="taxonomic scope" value="Bacteria"/>
</dbReference>
<dbReference type="HOGENOM" id="CLU_019796_4_0_6"/>
<dbReference type="UniPathway" id="UPA00244">
    <property type="reaction ID" value="UER00310"/>
</dbReference>
<dbReference type="Proteomes" id="UP000002157">
    <property type="component" value="Chromosome"/>
</dbReference>
<dbReference type="GO" id="GO:0005829">
    <property type="term" value="C:cytosol"/>
    <property type="evidence" value="ECO:0007669"/>
    <property type="project" value="TreeGrafter"/>
</dbReference>
<dbReference type="GO" id="GO:0033711">
    <property type="term" value="F:4-phosphoerythronate dehydrogenase activity"/>
    <property type="evidence" value="ECO:0007669"/>
    <property type="project" value="UniProtKB-EC"/>
</dbReference>
<dbReference type="GO" id="GO:0051287">
    <property type="term" value="F:NAD binding"/>
    <property type="evidence" value="ECO:0007669"/>
    <property type="project" value="InterPro"/>
</dbReference>
<dbReference type="GO" id="GO:0046983">
    <property type="term" value="F:protein dimerization activity"/>
    <property type="evidence" value="ECO:0007669"/>
    <property type="project" value="InterPro"/>
</dbReference>
<dbReference type="GO" id="GO:0036001">
    <property type="term" value="P:'de novo' pyridoxal 5'-phosphate biosynthetic process"/>
    <property type="evidence" value="ECO:0007669"/>
    <property type="project" value="TreeGrafter"/>
</dbReference>
<dbReference type="GO" id="GO:0008615">
    <property type="term" value="P:pyridoxine biosynthetic process"/>
    <property type="evidence" value="ECO:0007669"/>
    <property type="project" value="UniProtKB-UniRule"/>
</dbReference>
<dbReference type="CDD" id="cd12158">
    <property type="entry name" value="ErythrP_dh"/>
    <property type="match status" value="1"/>
</dbReference>
<dbReference type="Gene3D" id="3.30.1370.170">
    <property type="match status" value="1"/>
</dbReference>
<dbReference type="Gene3D" id="3.40.50.720">
    <property type="entry name" value="NAD(P)-binding Rossmann-like Domain"/>
    <property type="match status" value="2"/>
</dbReference>
<dbReference type="HAMAP" id="MF_01825">
    <property type="entry name" value="PdxB"/>
    <property type="match status" value="1"/>
</dbReference>
<dbReference type="InterPro" id="IPR006139">
    <property type="entry name" value="D-isomer_2_OHA_DH_cat_dom"/>
</dbReference>
<dbReference type="InterPro" id="IPR029753">
    <property type="entry name" value="D-isomer_DH_CS"/>
</dbReference>
<dbReference type="InterPro" id="IPR006140">
    <property type="entry name" value="D-isomer_DH_NAD-bd"/>
</dbReference>
<dbReference type="InterPro" id="IPR020921">
    <property type="entry name" value="Erythronate-4-P_DHase"/>
</dbReference>
<dbReference type="InterPro" id="IPR024531">
    <property type="entry name" value="Erythronate-4-P_DHase_dimer"/>
</dbReference>
<dbReference type="InterPro" id="IPR036291">
    <property type="entry name" value="NAD(P)-bd_dom_sf"/>
</dbReference>
<dbReference type="InterPro" id="IPR038251">
    <property type="entry name" value="PdxB_dimer_sf"/>
</dbReference>
<dbReference type="NCBIfam" id="NF001309">
    <property type="entry name" value="PRK00257.1"/>
    <property type="match status" value="1"/>
</dbReference>
<dbReference type="PANTHER" id="PTHR42938">
    <property type="entry name" value="FORMATE DEHYDROGENASE 1"/>
    <property type="match status" value="1"/>
</dbReference>
<dbReference type="PANTHER" id="PTHR42938:SF9">
    <property type="entry name" value="FORMATE DEHYDROGENASE 1"/>
    <property type="match status" value="1"/>
</dbReference>
<dbReference type="Pfam" id="PF00389">
    <property type="entry name" value="2-Hacid_dh"/>
    <property type="match status" value="1"/>
</dbReference>
<dbReference type="Pfam" id="PF02826">
    <property type="entry name" value="2-Hacid_dh_C"/>
    <property type="match status" value="1"/>
</dbReference>
<dbReference type="Pfam" id="PF11890">
    <property type="entry name" value="DUF3410"/>
    <property type="match status" value="1"/>
</dbReference>
<dbReference type="SUPFAM" id="SSF52283">
    <property type="entry name" value="Formate/glycerate dehydrogenase catalytic domain-like"/>
    <property type="match status" value="1"/>
</dbReference>
<dbReference type="SUPFAM" id="SSF51735">
    <property type="entry name" value="NAD(P)-binding Rossmann-fold domains"/>
    <property type="match status" value="1"/>
</dbReference>
<dbReference type="PROSITE" id="PS00671">
    <property type="entry name" value="D_2_HYDROXYACID_DH_3"/>
    <property type="match status" value="1"/>
</dbReference>
<feature type="chain" id="PRO_1000088423" description="Erythronate-4-phosphate dehydrogenase">
    <location>
        <begin position="1"/>
        <end position="380"/>
    </location>
</feature>
<feature type="active site" evidence="1">
    <location>
        <position position="207"/>
    </location>
</feature>
<feature type="active site" evidence="1">
    <location>
        <position position="236"/>
    </location>
</feature>
<feature type="active site" description="Proton donor" evidence="1">
    <location>
        <position position="253"/>
    </location>
</feature>
<feature type="binding site" evidence="1">
    <location>
        <position position="45"/>
    </location>
    <ligand>
        <name>substrate</name>
    </ligand>
</feature>
<feature type="binding site" evidence="1">
    <location>
        <position position="66"/>
    </location>
    <ligand>
        <name>substrate</name>
    </ligand>
</feature>
<feature type="binding site" evidence="1">
    <location>
        <position position="146"/>
    </location>
    <ligand>
        <name>NAD(+)</name>
        <dbReference type="ChEBI" id="CHEBI:57540"/>
    </ligand>
</feature>
<feature type="binding site" evidence="1">
    <location>
        <position position="174"/>
    </location>
    <ligand>
        <name>NAD(+)</name>
        <dbReference type="ChEBI" id="CHEBI:57540"/>
    </ligand>
</feature>
<feature type="binding site" evidence="1">
    <location>
        <begin position="205"/>
        <end position="207"/>
    </location>
    <ligand>
        <name>NAD(+)</name>
        <dbReference type="ChEBI" id="CHEBI:57540"/>
    </ligand>
</feature>
<feature type="binding site" evidence="1">
    <location>
        <position position="231"/>
    </location>
    <ligand>
        <name>NAD(+)</name>
        <dbReference type="ChEBI" id="CHEBI:57540"/>
    </ligand>
</feature>
<feature type="binding site" evidence="1">
    <location>
        <position position="256"/>
    </location>
    <ligand>
        <name>NAD(+)</name>
        <dbReference type="ChEBI" id="CHEBI:57540"/>
    </ligand>
</feature>
<feature type="binding site" evidence="1">
    <location>
        <position position="257"/>
    </location>
    <ligand>
        <name>substrate</name>
    </ligand>
</feature>
<keyword id="KW-0963">Cytoplasm</keyword>
<keyword id="KW-0520">NAD</keyword>
<keyword id="KW-0560">Oxidoreductase</keyword>
<keyword id="KW-0664">Pyridoxine biosynthesis</keyword>
<comment type="function">
    <text evidence="1">Catalyzes the oxidation of erythronate-4-phosphate to 3-hydroxy-2-oxo-4-phosphonooxybutanoate.</text>
</comment>
<comment type="catalytic activity">
    <reaction evidence="1">
        <text>4-phospho-D-erythronate + NAD(+) = (R)-3-hydroxy-2-oxo-4-phosphooxybutanoate + NADH + H(+)</text>
        <dbReference type="Rhea" id="RHEA:18829"/>
        <dbReference type="ChEBI" id="CHEBI:15378"/>
        <dbReference type="ChEBI" id="CHEBI:57540"/>
        <dbReference type="ChEBI" id="CHEBI:57945"/>
        <dbReference type="ChEBI" id="CHEBI:58538"/>
        <dbReference type="ChEBI" id="CHEBI:58766"/>
        <dbReference type="EC" id="1.1.1.290"/>
    </reaction>
</comment>
<comment type="pathway">
    <text evidence="1">Cofactor biosynthesis; pyridoxine 5'-phosphate biosynthesis; pyridoxine 5'-phosphate from D-erythrose 4-phosphate: step 2/5.</text>
</comment>
<comment type="subunit">
    <text evidence="1">Homodimer.</text>
</comment>
<comment type="subcellular location">
    <subcellularLocation>
        <location evidence="1">Cytoplasm</location>
    </subcellularLocation>
</comment>
<comment type="similarity">
    <text evidence="1">Belongs to the D-isomer specific 2-hydroxyacid dehydrogenase family. PdxB subfamily.</text>
</comment>
<gene>
    <name evidence="1" type="primary">pdxB</name>
    <name type="ordered locus">PputGB1_1657</name>
</gene>
<proteinExistence type="inferred from homology"/>
<organism>
    <name type="scientific">Pseudomonas putida (strain GB-1)</name>
    <dbReference type="NCBI Taxonomy" id="76869"/>
    <lineage>
        <taxon>Bacteria</taxon>
        <taxon>Pseudomonadati</taxon>
        <taxon>Pseudomonadota</taxon>
        <taxon>Gammaproteobacteria</taxon>
        <taxon>Pseudomonadales</taxon>
        <taxon>Pseudomonadaceae</taxon>
        <taxon>Pseudomonas</taxon>
    </lineage>
</organism>
<accession>B0KGD9</accession>
<sequence length="380" mass="41411">MLIVADENIPLLDAFFQGFGEIRRYPGRSLDAASVKDADILLVRSVTKVDRQLLEGSRVRFVGTCTIGTDHLDLDYFAQASISWSSAPGCNARGVVDYVLGSLLTLAELDGVALAERVYGVVGAGEVGGRLVRVLHGLGWKVLVCDPLRQAAEGGDYVSLETIVQQCDVISLHTPLQRGGEHPTWHLLGPAQLAQLRPGAWLVNASRGPVVDNIALRELLLDREDVHAVLDVWEGEPQVDLQLADLCTLASPHIAGYSLDGRQRGTAQIYQALCRFLGVDEQVQLADLLPRPALAQVELDASTDPAWALATLCRAVYDPRRDDADFRRSLSDDPQLQRAAFDQLRKHYPPRREIEGLAVRLRGESPQLAQLVSALGGALV</sequence>
<protein>
    <recommendedName>
        <fullName evidence="1">Erythronate-4-phosphate dehydrogenase</fullName>
        <ecNumber evidence="1">1.1.1.290</ecNumber>
    </recommendedName>
</protein>
<name>PDXB_PSEPG</name>
<reference key="1">
    <citation type="submission" date="2008-01" db="EMBL/GenBank/DDBJ databases">
        <title>Complete sequence of Pseudomonas putida GB-1.</title>
        <authorList>
            <consortium name="US DOE Joint Genome Institute"/>
            <person name="Copeland A."/>
            <person name="Lucas S."/>
            <person name="Lapidus A."/>
            <person name="Barry K."/>
            <person name="Glavina del Rio T."/>
            <person name="Dalin E."/>
            <person name="Tice H."/>
            <person name="Pitluck S."/>
            <person name="Bruce D."/>
            <person name="Goodwin L."/>
            <person name="Chertkov O."/>
            <person name="Brettin T."/>
            <person name="Detter J.C."/>
            <person name="Han C."/>
            <person name="Kuske C.R."/>
            <person name="Schmutz J."/>
            <person name="Larimer F."/>
            <person name="Land M."/>
            <person name="Hauser L."/>
            <person name="Kyrpides N."/>
            <person name="Kim E."/>
            <person name="McCarthy J.K."/>
            <person name="Richardson P."/>
        </authorList>
    </citation>
    <scope>NUCLEOTIDE SEQUENCE [LARGE SCALE GENOMIC DNA]</scope>
    <source>
        <strain>GB-1</strain>
    </source>
</reference>
<evidence type="ECO:0000255" key="1">
    <source>
        <dbReference type="HAMAP-Rule" id="MF_01825"/>
    </source>
</evidence>